<feature type="chain" id="PRO_0000458733" description="Endolysin">
    <location>
        <begin position="1"/>
        <end position="151"/>
    </location>
</feature>
<feature type="binding site" evidence="1">
    <location>
        <position position="18"/>
    </location>
    <ligand>
        <name>Zn(2+)</name>
        <dbReference type="ChEBI" id="CHEBI:29105"/>
    </ligand>
</feature>
<feature type="binding site" evidence="1">
    <location>
        <position position="123"/>
    </location>
    <ligand>
        <name>Zn(2+)</name>
        <dbReference type="ChEBI" id="CHEBI:29105"/>
    </ligand>
</feature>
<feature type="binding site" evidence="1">
    <location>
        <position position="131"/>
    </location>
    <ligand>
        <name>Zn(2+)</name>
        <dbReference type="ChEBI" id="CHEBI:29105"/>
    </ligand>
</feature>
<feature type="site" description="Essential for amidase activity and zinc hydrate coordination" evidence="1">
    <location>
        <position position="47"/>
    </location>
</feature>
<organism evidence="6">
    <name type="scientific">Enterobacteria phage K11</name>
    <name type="common">Bacteriophage K11</name>
    <dbReference type="NCBI Taxonomy" id="532077"/>
    <lineage>
        <taxon>Viruses</taxon>
        <taxon>Duplodnaviria</taxon>
        <taxon>Heunggongvirae</taxon>
        <taxon>Uroviricota</taxon>
        <taxon>Caudoviricetes</taxon>
        <taxon>Autographiviridae</taxon>
        <taxon>Studiervirinae</taxon>
        <taxon>Przondovirus</taxon>
        <taxon>Przondovirus K11</taxon>
    </lineage>
</organism>
<protein>
    <recommendedName>
        <fullName evidence="1 3">Endolysin</fullName>
        <ecNumber evidence="1 2">3.5.1.28</ecNumber>
    </recommendedName>
    <alternativeName>
        <fullName evidence="4">Gene product 3.5</fullName>
        <shortName evidence="4">gp3.5</shortName>
    </alternativeName>
    <alternativeName>
        <fullName evidence="1 3">N-acetylmuramoyl-L-alanine amidase</fullName>
    </alternativeName>
</protein>
<accession>Q3ZFI3</accession>
<dbReference type="EC" id="3.5.1.28" evidence="1 2"/>
<dbReference type="EMBL" id="AY871790">
    <property type="protein sequence ID" value="AAX62800.1"/>
    <property type="molecule type" value="Genomic_DNA"/>
</dbReference>
<dbReference type="SMR" id="Q3ZFI3"/>
<dbReference type="GO" id="GO:0030430">
    <property type="term" value="C:host cell cytoplasm"/>
    <property type="evidence" value="ECO:0007669"/>
    <property type="project" value="UniProtKB-SubCell"/>
</dbReference>
<dbReference type="GO" id="GO:0008745">
    <property type="term" value="F:N-acetylmuramoyl-L-alanine amidase activity"/>
    <property type="evidence" value="ECO:0007669"/>
    <property type="project" value="UniProtKB-UniRule"/>
</dbReference>
<dbReference type="GO" id="GO:0008270">
    <property type="term" value="F:zinc ion binding"/>
    <property type="evidence" value="ECO:0007669"/>
    <property type="project" value="InterPro"/>
</dbReference>
<dbReference type="GO" id="GO:0042742">
    <property type="term" value="P:defense response to bacterium"/>
    <property type="evidence" value="ECO:0007669"/>
    <property type="project" value="UniProtKB-KW"/>
</dbReference>
<dbReference type="GO" id="GO:0032897">
    <property type="term" value="P:negative regulation of viral transcription"/>
    <property type="evidence" value="ECO:0007669"/>
    <property type="project" value="InterPro"/>
</dbReference>
<dbReference type="GO" id="GO:0009253">
    <property type="term" value="P:peptidoglycan catabolic process"/>
    <property type="evidence" value="ECO:0007669"/>
    <property type="project" value="UniProtKB-UniRule"/>
</dbReference>
<dbReference type="GO" id="GO:0044659">
    <property type="term" value="P:viral release from host cell by cytolysis"/>
    <property type="evidence" value="ECO:0007669"/>
    <property type="project" value="UniProtKB-UniRule"/>
</dbReference>
<dbReference type="CDD" id="cd06583">
    <property type="entry name" value="PGRP"/>
    <property type="match status" value="1"/>
</dbReference>
<dbReference type="Gene3D" id="3.40.80.10">
    <property type="entry name" value="Peptidoglycan recognition protein-like"/>
    <property type="match status" value="1"/>
</dbReference>
<dbReference type="HAMAP" id="MF_04111">
    <property type="entry name" value="ENDOLYSIN_T7"/>
    <property type="match status" value="1"/>
</dbReference>
<dbReference type="InterPro" id="IPR036505">
    <property type="entry name" value="Amidase/PGRP_sf"/>
</dbReference>
<dbReference type="InterPro" id="IPR002502">
    <property type="entry name" value="Amidase_domain"/>
</dbReference>
<dbReference type="InterPro" id="IPR034689">
    <property type="entry name" value="Endolysin_T7_type"/>
</dbReference>
<dbReference type="InterPro" id="IPR015510">
    <property type="entry name" value="PGRP"/>
</dbReference>
<dbReference type="InterPro" id="IPR006619">
    <property type="entry name" value="PGRP_domain_met/bac"/>
</dbReference>
<dbReference type="PANTHER" id="PTHR11022">
    <property type="entry name" value="PEPTIDOGLYCAN RECOGNITION PROTEIN"/>
    <property type="match status" value="1"/>
</dbReference>
<dbReference type="PANTHER" id="PTHR11022:SF41">
    <property type="entry name" value="PEPTIDOGLYCAN-RECOGNITION PROTEIN LC-RELATED"/>
    <property type="match status" value="1"/>
</dbReference>
<dbReference type="Pfam" id="PF01510">
    <property type="entry name" value="Amidase_2"/>
    <property type="match status" value="1"/>
</dbReference>
<dbReference type="SMART" id="SM00644">
    <property type="entry name" value="Ami_2"/>
    <property type="match status" value="1"/>
</dbReference>
<dbReference type="SMART" id="SM00701">
    <property type="entry name" value="PGRP"/>
    <property type="match status" value="1"/>
</dbReference>
<dbReference type="SUPFAM" id="SSF55846">
    <property type="entry name" value="N-acetylmuramoyl-L-alanine amidase-like"/>
    <property type="match status" value="1"/>
</dbReference>
<reference key="1">
    <citation type="journal article" date="2005" name="Protein Expr. Purif.">
        <title>Cloning and expression of Klebsiella phage K11 lysozyme gene.</title>
        <authorList>
            <person name="Junn H.J."/>
            <person name="Youn J."/>
            <person name="Suh K.H."/>
            <person name="Lee S.S."/>
        </authorList>
    </citation>
    <scope>NUCLEOTIDE SEQUENCE [GENOMIC DNA]</scope>
</reference>
<reference key="2">
    <citation type="journal article" date="2013" name="Appl. Microbiol. Biotechnol.">
        <title>Characterization of five novel endolysins from Gram-negative infecting bacteriophages.</title>
        <authorList>
            <person name="Walmagh M."/>
            <person name="Boczkowska B."/>
            <person name="Grymonprez B."/>
            <person name="Briers Y."/>
            <person name="Drulis-Kawa Z."/>
            <person name="Lavigne R."/>
        </authorList>
    </citation>
    <scope>FUNCTION</scope>
    <scope>BIOPHYSICOCHEMICAL PROPERTIES</scope>
    <scope>CATALYTIC ACTIVITY</scope>
</reference>
<keyword id="KW-0929">Antimicrobial</keyword>
<keyword id="KW-0081">Bacteriolytic enzyme</keyword>
<keyword id="KW-0204">Cytolysis</keyword>
<keyword id="KW-0578">Host cell lysis by virus</keyword>
<keyword id="KW-1035">Host cytoplasm</keyword>
<keyword id="KW-0378">Hydrolase</keyword>
<keyword id="KW-0426">Late protein</keyword>
<keyword id="KW-0479">Metal-binding</keyword>
<keyword id="KW-1188">Viral release from host cell</keyword>
<keyword id="KW-0862">Zinc</keyword>
<name>ENLYS_BPK11</name>
<comment type="function">
    <text evidence="1 5">Endolysin with amidase activity that degrades host peptidoglycans and participates with the holin and spanin proteins in the sequential events which lead to the programmed host cell lysis releasing the mature viral particles (Probable). Once the holin has permeabilized the host cell membrane, the endolysin can reach the periplasm and breaking down the peptidoglycan layer (By similarity).</text>
</comment>
<comment type="function">
    <text evidence="1">Plays an important role in the switch between viral transcription and genome replication. Once produced in sufficient amount, interacts with and inhibits the viral RNA polymerase that becomes unable to produce additional late transcripts. This lysozyme-polymerase complex in turn plays an active role in viral genome replication and packaging.</text>
</comment>
<comment type="catalytic activity">
    <reaction evidence="1 2">
        <text>Hydrolyzes the link between N-acetylmuramoyl residues and L-amino acid residues in certain cell-wall glycopeptides.</text>
        <dbReference type="EC" id="3.5.1.28"/>
    </reaction>
</comment>
<comment type="cofactor">
    <cofactor evidence="1">
        <name>Zn(2+)</name>
        <dbReference type="ChEBI" id="CHEBI:29105"/>
    </cofactor>
    <text evidence="1">Zn(2+) is required for amidase activity.</text>
</comment>
<comment type="activity regulation">
    <text evidence="1">Binding to the viral RNA polymerase inhibits amidase activity.</text>
</comment>
<comment type="biophysicochemical properties">
    <phDependence>
        <text evidence="2">Optimum pH is 7.</text>
    </phDependence>
</comment>
<comment type="subunit">
    <text evidence="1">Interacts with the viral RNA polymerase.</text>
</comment>
<comment type="subcellular location">
    <subcellularLocation>
        <location evidence="1">Host cytoplasm</location>
    </subcellularLocation>
    <text evidence="1">The endolysin is cytoplasmic, but can reach the periplasmic space with the help of the holins which disrupt the host cell membrane.</text>
</comment>
<comment type="similarity">
    <text evidence="1">Belongs to the N-acetylmuramoyl-L-alanine amidase 2 family.</text>
</comment>
<evidence type="ECO:0000255" key="1">
    <source>
        <dbReference type="HAMAP-Rule" id="MF_04111"/>
    </source>
</evidence>
<evidence type="ECO:0000269" key="2">
    <source>
    </source>
</evidence>
<evidence type="ECO:0000303" key="3">
    <source>
    </source>
</evidence>
<evidence type="ECO:0000305" key="4"/>
<evidence type="ECO:0000305" key="5">
    <source>
    </source>
</evidence>
<evidence type="ECO:0000312" key="6">
    <source>
        <dbReference type="EMBL" id="AAX62800.1"/>
    </source>
</evidence>
<organismHost>
    <name type="scientific">Klebsiella</name>
    <dbReference type="NCBI Taxonomy" id="570"/>
</organismHost>
<sequence>MAKVQFTKRQETSQFFVHCSATKANMDVGVREIRQWHKEQGWLDVGYHFIIRRDGTVEAGRDQDAVGSHVKGYNSTSVGVCLVGGIDAKGNPEANFTPQQMSALNGVLHELRGTYPKAVIMAHHDVAPKACPSFDLQRWVKTGELVTSDRG</sequence>
<proteinExistence type="evidence at protein level"/>